<protein>
    <recommendedName>
        <fullName evidence="3">Phosphoenolpyruvate carboxykinase (ATP)</fullName>
        <shortName evidence="3">PCK</shortName>
        <shortName evidence="3">PEP carboxykinase</shortName>
        <shortName evidence="3">PEPCK</shortName>
        <ecNumber evidence="3">4.1.1.49</ecNumber>
    </recommendedName>
</protein>
<feature type="chain" id="PRO_0000236952" description="Phosphoenolpyruvate carboxykinase (ATP)">
    <location>
        <begin position="1"/>
        <end position="529"/>
    </location>
</feature>
<feature type="binding site" evidence="3">
    <location>
        <position position="52"/>
    </location>
    <ligand>
        <name>substrate</name>
    </ligand>
</feature>
<feature type="binding site" evidence="4 5 8 9 10">
    <location>
        <position position="130"/>
    </location>
    <ligand>
        <name>Ca(2+)</name>
        <dbReference type="ChEBI" id="CHEBI:29108"/>
    </ligand>
</feature>
<feature type="binding site" evidence="4 5 8 9 10">
    <location>
        <position position="131"/>
    </location>
    <ligand>
        <name>Ca(2+)</name>
        <dbReference type="ChEBI" id="CHEBI:29108"/>
    </ligand>
</feature>
<feature type="binding site" evidence="4 5 8 10">
    <location>
        <position position="133"/>
    </location>
    <ligand>
        <name>Ca(2+)</name>
        <dbReference type="ChEBI" id="CHEBI:29108"/>
    </ligand>
</feature>
<feature type="binding site" evidence="3">
    <location>
        <position position="191"/>
    </location>
    <ligand>
        <name>substrate</name>
    </ligand>
</feature>
<feature type="binding site" evidence="3 10">
    <location>
        <position position="197"/>
    </location>
    <ligand>
        <name>ATP</name>
        <dbReference type="ChEBI" id="CHEBI:30616"/>
    </ligand>
</feature>
<feature type="binding site" evidence="3">
    <location>
        <position position="197"/>
    </location>
    <ligand>
        <name>Mn(2+)</name>
        <dbReference type="ChEBI" id="CHEBI:29035"/>
    </ligand>
</feature>
<feature type="binding site" evidence="3">
    <location>
        <position position="197"/>
    </location>
    <ligand>
        <name>substrate</name>
    </ligand>
</feature>
<feature type="binding site" evidence="3 10">
    <location>
        <position position="216"/>
    </location>
    <ligand>
        <name>ATP</name>
        <dbReference type="ChEBI" id="CHEBI:30616"/>
    </ligand>
</feature>
<feature type="binding site" evidence="3">
    <location>
        <position position="216"/>
    </location>
    <ligand>
        <name>Mn(2+)</name>
        <dbReference type="ChEBI" id="CHEBI:29035"/>
        <label>2</label>
    </ligand>
</feature>
<feature type="binding site" evidence="2">
    <location>
        <position position="216"/>
    </location>
    <ligand>
        <name>Mn(2+)</name>
        <dbReference type="ChEBI" id="CHEBI:29035"/>
    </ligand>
</feature>
<feature type="binding site" evidence="3 4 5 9 10">
    <location>
        <begin position="232"/>
        <end position="240"/>
    </location>
    <ligand>
        <name>ATP</name>
        <dbReference type="ChEBI" id="CHEBI:30616"/>
    </ligand>
</feature>
<feature type="binding site" evidence="3">
    <location>
        <position position="253"/>
    </location>
    <ligand>
        <name>Mn(2+)</name>
        <dbReference type="ChEBI" id="CHEBI:29035"/>
    </ligand>
</feature>
<feature type="binding site" evidence="4 5 8 9 10">
    <location>
        <position position="267"/>
    </location>
    <ligand>
        <name>Ca(2+)</name>
        <dbReference type="ChEBI" id="CHEBI:29108"/>
    </ligand>
</feature>
<feature type="binding site" evidence="3">
    <location>
        <position position="281"/>
    </location>
    <ligand>
        <name>ATP</name>
        <dbReference type="ChEBI" id="CHEBI:30616"/>
    </ligand>
</feature>
<feature type="binding site" evidence="3 5 10">
    <location>
        <position position="319"/>
    </location>
    <ligand>
        <name>ATP</name>
        <dbReference type="ChEBI" id="CHEBI:30616"/>
    </ligand>
</feature>
<feature type="binding site" evidence="3">
    <location>
        <position position="319"/>
    </location>
    <ligand>
        <name>substrate</name>
    </ligand>
</feature>
<feature type="binding site" evidence="6 7 9 10">
    <location>
        <begin position="438"/>
        <end position="439"/>
    </location>
    <ligand>
        <name>ATP</name>
        <dbReference type="ChEBI" id="CHEBI:30616"/>
    </ligand>
</feature>
<feature type="binding site" evidence="3 4 5">
    <location>
        <position position="439"/>
    </location>
    <ligand>
        <name>ATP</name>
        <dbReference type="ChEBI" id="CHEBI:30616"/>
    </ligand>
</feature>
<feature type="binding site" evidence="3 4 5 9 10">
    <location>
        <position position="444"/>
    </location>
    <ligand>
        <name>ATP</name>
        <dbReference type="ChEBI" id="CHEBI:30616"/>
    </ligand>
</feature>
<feature type="helix" evidence="11">
    <location>
        <begin position="5"/>
        <end position="7"/>
    </location>
</feature>
<feature type="strand" evidence="11">
    <location>
        <begin position="15"/>
        <end position="18"/>
    </location>
</feature>
<feature type="helix" evidence="11">
    <location>
        <begin position="21"/>
        <end position="30"/>
    </location>
</feature>
<feature type="strand" evidence="11">
    <location>
        <begin position="42"/>
        <end position="44"/>
    </location>
</feature>
<feature type="helix" evidence="11">
    <location>
        <begin position="54"/>
        <end position="56"/>
    </location>
</feature>
<feature type="strand" evidence="11">
    <location>
        <begin position="57"/>
        <end position="60"/>
    </location>
</feature>
<feature type="turn" evidence="11">
    <location>
        <begin position="63"/>
        <end position="68"/>
    </location>
</feature>
<feature type="turn" evidence="11">
    <location>
        <begin position="72"/>
        <end position="74"/>
    </location>
</feature>
<feature type="strand" evidence="11">
    <location>
        <begin position="75"/>
        <end position="78"/>
    </location>
</feature>
<feature type="helix" evidence="11">
    <location>
        <begin position="80"/>
        <end position="95"/>
    </location>
</feature>
<feature type="strand" evidence="11">
    <location>
        <begin position="99"/>
        <end position="106"/>
    </location>
</feature>
<feature type="turn" evidence="11">
    <location>
        <begin position="110"/>
        <end position="112"/>
    </location>
</feature>
<feature type="strand" evidence="11">
    <location>
        <begin position="114"/>
        <end position="121"/>
    </location>
</feature>
<feature type="helix" evidence="11">
    <location>
        <begin position="123"/>
        <end position="132"/>
    </location>
</feature>
<feature type="helix" evidence="11">
    <location>
        <begin position="136"/>
        <end position="139"/>
    </location>
</feature>
<feature type="strand" evidence="11">
    <location>
        <begin position="151"/>
        <end position="157"/>
    </location>
</feature>
<feature type="helix" evidence="11">
    <location>
        <begin position="164"/>
        <end position="167"/>
    </location>
</feature>
<feature type="strand" evidence="11">
    <location>
        <begin position="170"/>
        <end position="172"/>
    </location>
</feature>
<feature type="strand" evidence="11">
    <location>
        <begin position="174"/>
        <end position="178"/>
    </location>
</feature>
<feature type="turn" evidence="11">
    <location>
        <begin position="179"/>
        <end position="182"/>
    </location>
</feature>
<feature type="strand" evidence="11">
    <location>
        <begin position="183"/>
        <end position="188"/>
    </location>
</feature>
<feature type="helix" evidence="11">
    <location>
        <begin position="193"/>
        <end position="206"/>
    </location>
</feature>
<feature type="helix" evidence="11">
    <location>
        <begin position="207"/>
        <end position="210"/>
    </location>
</feature>
<feature type="strand" evidence="11">
    <location>
        <begin position="213"/>
        <end position="216"/>
    </location>
</feature>
<feature type="strand" evidence="11">
    <location>
        <begin position="218"/>
        <end position="221"/>
    </location>
</feature>
<feature type="strand" evidence="11">
    <location>
        <begin position="227"/>
        <end position="232"/>
    </location>
</feature>
<feature type="helix" evidence="11">
    <location>
        <begin position="238"/>
        <end position="241"/>
    </location>
</feature>
<feature type="strand" evidence="11">
    <location>
        <begin position="249"/>
        <end position="257"/>
    </location>
</feature>
<feature type="strand" evidence="11">
    <location>
        <begin position="262"/>
        <end position="265"/>
    </location>
</feature>
<feature type="strand" evidence="11">
    <location>
        <begin position="267"/>
        <end position="272"/>
    </location>
</feature>
<feature type="turn" evidence="11">
    <location>
        <begin position="278"/>
        <end position="280"/>
    </location>
</feature>
<feature type="helix" evidence="11">
    <location>
        <begin position="282"/>
        <end position="288"/>
    </location>
</feature>
<feature type="strand" evidence="11">
    <location>
        <begin position="294"/>
        <end position="297"/>
    </location>
</feature>
<feature type="turn" evidence="11">
    <location>
        <begin position="302"/>
        <end position="304"/>
    </location>
</feature>
<feature type="strand" evidence="11">
    <location>
        <begin position="319"/>
        <end position="323"/>
    </location>
</feature>
<feature type="helix" evidence="11">
    <location>
        <begin position="324"/>
        <end position="326"/>
    </location>
</feature>
<feature type="strand" evidence="11">
    <location>
        <begin position="328"/>
        <end position="330"/>
    </location>
</feature>
<feature type="strand" evidence="11">
    <location>
        <begin position="334"/>
        <end position="336"/>
    </location>
</feature>
<feature type="strand" evidence="11">
    <location>
        <begin position="339"/>
        <end position="346"/>
    </location>
</feature>
<feature type="strand" evidence="11">
    <location>
        <begin position="355"/>
        <end position="359"/>
    </location>
</feature>
<feature type="helix" evidence="11">
    <location>
        <begin position="361"/>
        <end position="370"/>
    </location>
</feature>
<feature type="strand" evidence="11">
    <location>
        <begin position="372"/>
        <end position="375"/>
    </location>
</feature>
<feature type="strand" evidence="11">
    <location>
        <begin position="387"/>
        <end position="390"/>
    </location>
</feature>
<feature type="helix" evidence="11">
    <location>
        <begin position="392"/>
        <end position="394"/>
    </location>
</feature>
<feature type="helix" evidence="11">
    <location>
        <begin position="396"/>
        <end position="398"/>
    </location>
</feature>
<feature type="helix" evidence="11">
    <location>
        <begin position="403"/>
        <end position="417"/>
    </location>
</feature>
<feature type="strand" evidence="11">
    <location>
        <begin position="420"/>
        <end position="425"/>
    </location>
</feature>
<feature type="strand" evidence="11">
    <location>
        <begin position="427"/>
        <end position="432"/>
    </location>
</feature>
<feature type="turn" evidence="11">
    <location>
        <begin position="433"/>
        <end position="435"/>
    </location>
</feature>
<feature type="strand" evidence="11">
    <location>
        <begin position="436"/>
        <end position="438"/>
    </location>
</feature>
<feature type="helix" evidence="11">
    <location>
        <begin position="441"/>
        <end position="452"/>
    </location>
</feature>
<feature type="helix" evidence="11">
    <location>
        <begin position="455"/>
        <end position="458"/>
    </location>
</feature>
<feature type="strand" evidence="11">
    <location>
        <begin position="461"/>
        <end position="463"/>
    </location>
</feature>
<feature type="turn" evidence="11">
    <location>
        <begin position="465"/>
        <end position="467"/>
    </location>
</feature>
<feature type="strand" evidence="11">
    <location>
        <begin position="470"/>
        <end position="473"/>
    </location>
</feature>
<feature type="helix" evidence="11">
    <location>
        <begin position="480"/>
        <end position="483"/>
    </location>
</feature>
<feature type="helix" evidence="11">
    <location>
        <begin position="485"/>
        <end position="488"/>
    </location>
</feature>
<feature type="helix" evidence="11">
    <location>
        <begin position="492"/>
        <end position="514"/>
    </location>
</feature>
<feature type="helix" evidence="11">
    <location>
        <begin position="519"/>
        <end position="523"/>
    </location>
</feature>
<reference key="1">
    <citation type="submission" date="2004-11" db="EMBL/GenBank/DDBJ databases">
        <title>Complete genome sequence of Thermus thermophilus HB8.</title>
        <authorList>
            <person name="Masui R."/>
            <person name="Kurokawa K."/>
            <person name="Nakagawa N."/>
            <person name="Tokunaga F."/>
            <person name="Koyama Y."/>
            <person name="Shibata T."/>
            <person name="Oshima T."/>
            <person name="Yokoyama S."/>
            <person name="Yasunaga T."/>
            <person name="Kuramitsu S."/>
        </authorList>
    </citation>
    <scope>NUCLEOTIDE SEQUENCE [LARGE SCALE GENOMIC DNA]</scope>
    <source>
        <strain>ATCC 27634 / DSM 579 / HB8</strain>
    </source>
</reference>
<reference key="2">
    <citation type="journal article" date="2005" name="Acta Crystallogr. D">
        <title>Structure of ATP-dependent phosphoenolpyruvate carboxykinase from Thermus thermophilus HB8 showing the structural basis of induced fit and thermostability.</title>
        <authorList>
            <person name="Sugahara M."/>
            <person name="Ohshima N."/>
            <person name="Ukita Y."/>
            <person name="Sugahara M."/>
            <person name="Kunishima N."/>
        </authorList>
    </citation>
    <scope>X-RAY CRYSTALLOGRAPHY (2.0 ANGSTROMS) IN COMPLEX WITH ATP AND CALCIUM ION</scope>
    <scope>FUNCTION</scope>
    <scope>SUBUNIT</scope>
</reference>
<reference key="3">
    <citation type="submission" date="2007-10" db="PDB data bank">
        <title>Crystal structure of ATP-dependent phosphoenolpyruvate carboxykinase from Thermus thermophilus HB8.</title>
        <authorList>
            <consortium name="RIKEN structural genomics initiative (RSGI)"/>
        </authorList>
    </citation>
    <scope>X-RAY CRYSTALLOGRAPHY (2.4 ANGSTROMS) IN COMPLEX WITH ATP AND CALCIUM ION</scope>
    <scope>SUBUNIT</scope>
</reference>
<organism>
    <name type="scientific">Thermus thermophilus (strain ATCC 27634 / DSM 579 / HB8)</name>
    <dbReference type="NCBI Taxonomy" id="300852"/>
    <lineage>
        <taxon>Bacteria</taxon>
        <taxon>Thermotogati</taxon>
        <taxon>Deinococcota</taxon>
        <taxon>Deinococci</taxon>
        <taxon>Thermales</taxon>
        <taxon>Thermaceae</taxon>
        <taxon>Thermus</taxon>
    </lineage>
</organism>
<comment type="function">
    <text evidence="1 4">Involved in gluconeogenesis. Catalyzes the conversion of oxaloacetate (OAA) to phosphoenolpyruvate (PEP) through direct phosphoryl transfer between the nucleoside triphosphate and OAA (By similarity).</text>
</comment>
<comment type="catalytic activity">
    <reaction evidence="3">
        <text>oxaloacetate + ATP = phosphoenolpyruvate + ADP + CO2</text>
        <dbReference type="Rhea" id="RHEA:18617"/>
        <dbReference type="ChEBI" id="CHEBI:16452"/>
        <dbReference type="ChEBI" id="CHEBI:16526"/>
        <dbReference type="ChEBI" id="CHEBI:30616"/>
        <dbReference type="ChEBI" id="CHEBI:58702"/>
        <dbReference type="ChEBI" id="CHEBI:456216"/>
        <dbReference type="EC" id="4.1.1.49"/>
    </reaction>
</comment>
<comment type="cofactor">
    <cofactor evidence="3">
        <name>Mn(2+)</name>
        <dbReference type="ChEBI" id="CHEBI:29035"/>
    </cofactor>
    <text evidence="3">Binds 1 Mn(2+) ion per subunit.</text>
</comment>
<comment type="activity regulation">
    <text evidence="1">Allosterically activated by calcium.</text>
</comment>
<comment type="pathway">
    <text evidence="3">Carbohydrate biosynthesis; gluconeogenesis.</text>
</comment>
<comment type="subunit">
    <text evidence="6 7">Dimer of dimers.</text>
</comment>
<comment type="subcellular location">
    <subcellularLocation>
        <location evidence="3">Cytoplasm</location>
    </subcellularLocation>
</comment>
<comment type="similarity">
    <text evidence="3">Belongs to the phosphoenolpyruvate carboxykinase (ATP) family.</text>
</comment>
<accession>Q5SLL5</accession>
<accession>P84128</accession>
<accession>Q7SIC6</accession>
<name>PCKA_THET8</name>
<keyword id="KW-0002">3D-structure</keyword>
<keyword id="KW-0067">ATP-binding</keyword>
<keyword id="KW-0106">Calcium</keyword>
<keyword id="KW-0963">Cytoplasm</keyword>
<keyword id="KW-0210">Decarboxylase</keyword>
<keyword id="KW-0312">Gluconeogenesis</keyword>
<keyword id="KW-0456">Lyase</keyword>
<keyword id="KW-0464">Manganese</keyword>
<keyword id="KW-0479">Metal-binding</keyword>
<keyword id="KW-0547">Nucleotide-binding</keyword>
<keyword id="KW-1185">Reference proteome</keyword>
<sequence>MQRLEALGIHPKKRVFWNTVSPVLVEHTLLRGEGLLAHHGPLVVDTTPYTGRSPKDKFVVREPEVEGEIWWGEVNQPFAPEAFEALYQRVVQYLSERDLYVQDLYAGADRRYRLAVRVVTESPWHALFARNMFILPRRFGNDDEVEAFVPGFTVVHAPYFQAVPERDGTRSEVFVGISFQRRLVLIVGTKYAGEIKKSIFTVMNYLMPKRGVFPMHASANVGKEGDVAVFFGLSGTGKTTLSTDPERPLIGDDEHGWSEDGVFNFEGGCYAKVIRLSPEHEPLIYKASNQFEAILENVVVNPESRRVQWDDDSKTENTRSSYPIAHLENVVESGVAGHPRAIFFLSADAYGVLPPIARLSPEEAMYYFLSGYTARVAGTERGVTEPRATFSACFGAPFLPMHPGVYARMLGEKIRKHAPRVYLVNTGWTGGPYGVGYRFPLPVTRALLKAALSGALENVPYRRDPVFGFEVPLEAPGVPQELLNPRETWADKEAYDQQARKLARLFQENFQKYASGVAKEVAEAGPRTE</sequence>
<proteinExistence type="evidence at protein level"/>
<evidence type="ECO:0000250" key="1"/>
<evidence type="ECO:0000250" key="2">
    <source>
        <dbReference type="UniProtKB" id="P22259"/>
    </source>
</evidence>
<evidence type="ECO:0000255" key="3">
    <source>
        <dbReference type="HAMAP-Rule" id="MF_00453"/>
    </source>
</evidence>
<evidence type="ECO:0000269" key="4">
    <source>
    </source>
</evidence>
<evidence type="ECO:0000269" key="5">
    <source ref="3"/>
</evidence>
<evidence type="ECO:0000305" key="6">
    <source>
    </source>
</evidence>
<evidence type="ECO:0000305" key="7">
    <source ref="3"/>
</evidence>
<evidence type="ECO:0007744" key="8">
    <source>
        <dbReference type="PDB" id="1J3B"/>
    </source>
</evidence>
<evidence type="ECO:0007744" key="9">
    <source>
        <dbReference type="PDB" id="1XKV"/>
    </source>
</evidence>
<evidence type="ECO:0007744" key="10">
    <source>
        <dbReference type="PDB" id="2PC9"/>
    </source>
</evidence>
<evidence type="ECO:0007829" key="11">
    <source>
        <dbReference type="PDB" id="1J3B"/>
    </source>
</evidence>
<dbReference type="EC" id="4.1.1.49" evidence="3"/>
<dbReference type="EMBL" id="AP008226">
    <property type="protein sequence ID" value="BAD70101.1"/>
    <property type="molecule type" value="Genomic_DNA"/>
</dbReference>
<dbReference type="RefSeq" id="WP_011227826.1">
    <property type="nucleotide sequence ID" value="NC_006461.1"/>
</dbReference>
<dbReference type="RefSeq" id="YP_143544.1">
    <property type="nucleotide sequence ID" value="NC_006461.1"/>
</dbReference>
<dbReference type="PDB" id="1J3B">
    <property type="method" value="X-ray"/>
    <property type="resolution" value="2.00 A"/>
    <property type="chains" value="A/B=1-529"/>
</dbReference>
<dbReference type="PDB" id="1XKV">
    <property type="method" value="X-ray"/>
    <property type="resolution" value="2.20 A"/>
    <property type="chains" value="A/B=1-529"/>
</dbReference>
<dbReference type="PDB" id="2PC9">
    <property type="method" value="X-ray"/>
    <property type="resolution" value="2.40 A"/>
    <property type="chains" value="A/B/C/D=1-529"/>
</dbReference>
<dbReference type="PDBsum" id="1J3B"/>
<dbReference type="PDBsum" id="1XKV"/>
<dbReference type="PDBsum" id="2PC9"/>
<dbReference type="SMR" id="Q5SLL5"/>
<dbReference type="EnsemblBacteria" id="BAD70101">
    <property type="protein sequence ID" value="BAD70101"/>
    <property type="gene ID" value="BAD70101"/>
</dbReference>
<dbReference type="GeneID" id="3168667"/>
<dbReference type="KEGG" id="ttj:TTHA0278"/>
<dbReference type="PATRIC" id="fig|300852.9.peg.278"/>
<dbReference type="eggNOG" id="COG1866">
    <property type="taxonomic scope" value="Bacteria"/>
</dbReference>
<dbReference type="HOGENOM" id="CLU_018247_0_1_0"/>
<dbReference type="PhylomeDB" id="Q5SLL5"/>
<dbReference type="BRENDA" id="4.1.1.49">
    <property type="organism ID" value="2305"/>
</dbReference>
<dbReference type="UniPathway" id="UPA00138"/>
<dbReference type="EvolutionaryTrace" id="Q5SLL5"/>
<dbReference type="Proteomes" id="UP000000532">
    <property type="component" value="Chromosome"/>
</dbReference>
<dbReference type="GO" id="GO:0005829">
    <property type="term" value="C:cytosol"/>
    <property type="evidence" value="ECO:0007669"/>
    <property type="project" value="TreeGrafter"/>
</dbReference>
<dbReference type="GO" id="GO:0005524">
    <property type="term" value="F:ATP binding"/>
    <property type="evidence" value="ECO:0007669"/>
    <property type="project" value="UniProtKB-UniRule"/>
</dbReference>
<dbReference type="GO" id="GO:0046872">
    <property type="term" value="F:metal ion binding"/>
    <property type="evidence" value="ECO:0007669"/>
    <property type="project" value="UniProtKB-KW"/>
</dbReference>
<dbReference type="GO" id="GO:0004612">
    <property type="term" value="F:phosphoenolpyruvate carboxykinase (ATP) activity"/>
    <property type="evidence" value="ECO:0007669"/>
    <property type="project" value="UniProtKB-UniRule"/>
</dbReference>
<dbReference type="GO" id="GO:0006094">
    <property type="term" value="P:gluconeogenesis"/>
    <property type="evidence" value="ECO:0007669"/>
    <property type="project" value="UniProtKB-UniRule"/>
</dbReference>
<dbReference type="CDD" id="cd00484">
    <property type="entry name" value="PEPCK_ATP"/>
    <property type="match status" value="1"/>
</dbReference>
<dbReference type="Gene3D" id="3.90.228.20">
    <property type="match status" value="1"/>
</dbReference>
<dbReference type="Gene3D" id="3.40.449.10">
    <property type="entry name" value="Phosphoenolpyruvate Carboxykinase, domain 1"/>
    <property type="match status" value="1"/>
</dbReference>
<dbReference type="Gene3D" id="2.170.8.10">
    <property type="entry name" value="Phosphoenolpyruvate Carboxykinase, domain 2"/>
    <property type="match status" value="1"/>
</dbReference>
<dbReference type="HAMAP" id="MF_00453">
    <property type="entry name" value="PEPCK_ATP"/>
    <property type="match status" value="1"/>
</dbReference>
<dbReference type="InterPro" id="IPR001272">
    <property type="entry name" value="PEP_carboxykinase_ATP"/>
</dbReference>
<dbReference type="InterPro" id="IPR013035">
    <property type="entry name" value="PEP_carboxykinase_C"/>
</dbReference>
<dbReference type="InterPro" id="IPR008210">
    <property type="entry name" value="PEP_carboxykinase_N"/>
</dbReference>
<dbReference type="InterPro" id="IPR015994">
    <property type="entry name" value="PEPCK_ATP_CS"/>
</dbReference>
<dbReference type="NCBIfam" id="TIGR00224">
    <property type="entry name" value="pckA"/>
    <property type="match status" value="1"/>
</dbReference>
<dbReference type="NCBIfam" id="NF006820">
    <property type="entry name" value="PRK09344.1-2"/>
    <property type="match status" value="1"/>
</dbReference>
<dbReference type="NCBIfam" id="NF006821">
    <property type="entry name" value="PRK09344.1-3"/>
    <property type="match status" value="1"/>
</dbReference>
<dbReference type="PANTHER" id="PTHR30031:SF0">
    <property type="entry name" value="PHOSPHOENOLPYRUVATE CARBOXYKINASE (ATP)"/>
    <property type="match status" value="1"/>
</dbReference>
<dbReference type="PANTHER" id="PTHR30031">
    <property type="entry name" value="PHOSPHOENOLPYRUVATE CARBOXYKINASE ATP"/>
    <property type="match status" value="1"/>
</dbReference>
<dbReference type="Pfam" id="PF01293">
    <property type="entry name" value="PEPCK_ATP"/>
    <property type="match status" value="1"/>
</dbReference>
<dbReference type="PIRSF" id="PIRSF006294">
    <property type="entry name" value="PEP_crbxkin"/>
    <property type="match status" value="1"/>
</dbReference>
<dbReference type="SUPFAM" id="SSF68923">
    <property type="entry name" value="PEP carboxykinase N-terminal domain"/>
    <property type="match status" value="1"/>
</dbReference>
<dbReference type="SUPFAM" id="SSF53795">
    <property type="entry name" value="PEP carboxykinase-like"/>
    <property type="match status" value="1"/>
</dbReference>
<dbReference type="PROSITE" id="PS00532">
    <property type="entry name" value="PEPCK_ATP"/>
    <property type="match status" value="1"/>
</dbReference>
<gene>
    <name evidence="3" type="primary">pckA</name>
    <name type="synonym">tthHB8IM</name>
    <name type="ordered locus">TTHA0278</name>
</gene>